<accession>B1Y978</accession>
<organism>
    <name type="scientific">Pyrobaculum neutrophilum (strain DSM 2338 / JCM 9278 / NBRC 100436 / V24Sta)</name>
    <name type="common">Thermoproteus neutrophilus</name>
    <dbReference type="NCBI Taxonomy" id="444157"/>
    <lineage>
        <taxon>Archaea</taxon>
        <taxon>Thermoproteota</taxon>
        <taxon>Thermoprotei</taxon>
        <taxon>Thermoproteales</taxon>
        <taxon>Thermoproteaceae</taxon>
        <taxon>Pyrobaculum</taxon>
    </lineage>
</organism>
<dbReference type="EC" id="3.1.13.-" evidence="1"/>
<dbReference type="EMBL" id="CP001014">
    <property type="protein sequence ID" value="ACB40307.1"/>
    <property type="molecule type" value="Genomic_DNA"/>
</dbReference>
<dbReference type="RefSeq" id="WP_012350726.1">
    <property type="nucleotide sequence ID" value="NC_010525.1"/>
</dbReference>
<dbReference type="SMR" id="B1Y978"/>
<dbReference type="STRING" id="444157.Tneu_1381"/>
<dbReference type="GeneID" id="6164727"/>
<dbReference type="KEGG" id="tne:Tneu_1381"/>
<dbReference type="eggNOG" id="arCOG01575">
    <property type="taxonomic scope" value="Archaea"/>
</dbReference>
<dbReference type="HOGENOM" id="CLU_063514_0_0_2"/>
<dbReference type="OrthoDB" id="24266at2157"/>
<dbReference type="Proteomes" id="UP000001694">
    <property type="component" value="Chromosome"/>
</dbReference>
<dbReference type="GO" id="GO:0000177">
    <property type="term" value="C:cytoplasmic exosome (RNase complex)"/>
    <property type="evidence" value="ECO:0007669"/>
    <property type="project" value="TreeGrafter"/>
</dbReference>
<dbReference type="GO" id="GO:0000175">
    <property type="term" value="F:3'-5'-RNA exonuclease activity"/>
    <property type="evidence" value="ECO:0007669"/>
    <property type="project" value="UniProtKB-UniRule"/>
</dbReference>
<dbReference type="GO" id="GO:0003723">
    <property type="term" value="F:RNA binding"/>
    <property type="evidence" value="ECO:0007669"/>
    <property type="project" value="TreeGrafter"/>
</dbReference>
<dbReference type="GO" id="GO:0010467">
    <property type="term" value="P:gene expression"/>
    <property type="evidence" value="ECO:0007669"/>
    <property type="project" value="UniProtKB-ARBA"/>
</dbReference>
<dbReference type="GO" id="GO:0016075">
    <property type="term" value="P:rRNA catabolic process"/>
    <property type="evidence" value="ECO:0007669"/>
    <property type="project" value="TreeGrafter"/>
</dbReference>
<dbReference type="CDD" id="cd11366">
    <property type="entry name" value="RNase_PH_archRRP41"/>
    <property type="match status" value="1"/>
</dbReference>
<dbReference type="FunFam" id="3.30.230.70:FF:000004">
    <property type="entry name" value="Exosome complex component Rrp41"/>
    <property type="match status" value="1"/>
</dbReference>
<dbReference type="Gene3D" id="3.30.230.70">
    <property type="entry name" value="GHMP Kinase, N-terminal domain"/>
    <property type="match status" value="1"/>
</dbReference>
<dbReference type="HAMAP" id="MF_00591">
    <property type="entry name" value="Exosome_Rrp41"/>
    <property type="match status" value="1"/>
</dbReference>
<dbReference type="InterPro" id="IPR001247">
    <property type="entry name" value="ExoRNase_PH_dom1"/>
</dbReference>
<dbReference type="InterPro" id="IPR015847">
    <property type="entry name" value="ExoRNase_PH_dom2"/>
</dbReference>
<dbReference type="InterPro" id="IPR036345">
    <property type="entry name" value="ExoRNase_PH_dom2_sf"/>
</dbReference>
<dbReference type="InterPro" id="IPR027408">
    <property type="entry name" value="PNPase/RNase_PH_dom_sf"/>
</dbReference>
<dbReference type="InterPro" id="IPR020568">
    <property type="entry name" value="Ribosomal_Su5_D2-typ_SF"/>
</dbReference>
<dbReference type="InterPro" id="IPR050080">
    <property type="entry name" value="RNase_PH"/>
</dbReference>
<dbReference type="InterPro" id="IPR011807">
    <property type="entry name" value="Rrp41"/>
</dbReference>
<dbReference type="NCBIfam" id="TIGR02065">
    <property type="entry name" value="ECX1"/>
    <property type="match status" value="1"/>
</dbReference>
<dbReference type="PANTHER" id="PTHR11953">
    <property type="entry name" value="EXOSOME COMPLEX COMPONENT"/>
    <property type="match status" value="1"/>
</dbReference>
<dbReference type="PANTHER" id="PTHR11953:SF0">
    <property type="entry name" value="EXOSOME COMPLEX COMPONENT RRP41"/>
    <property type="match status" value="1"/>
</dbReference>
<dbReference type="Pfam" id="PF01138">
    <property type="entry name" value="RNase_PH"/>
    <property type="match status" value="1"/>
</dbReference>
<dbReference type="Pfam" id="PF03725">
    <property type="entry name" value="RNase_PH_C"/>
    <property type="match status" value="1"/>
</dbReference>
<dbReference type="SUPFAM" id="SSF55666">
    <property type="entry name" value="Ribonuclease PH domain 2-like"/>
    <property type="match status" value="1"/>
</dbReference>
<dbReference type="SUPFAM" id="SSF54211">
    <property type="entry name" value="Ribosomal protein S5 domain 2-like"/>
    <property type="match status" value="1"/>
</dbReference>
<proteinExistence type="inferred from homology"/>
<sequence length="246" mass="27028">MKKPPVPLLQGGVRADGRAPDQMREVQISVGVISNADGSAMVSYGATTAVAAVYGPREMHPRHLSLPDRGVMRVRYHMAPFSTKDERKSPTPSRREIEISKVLREALEPAVMLEQYPRSRIDVFIEILQADGSTRVASLTAASLALADAGIYMRDLVIGVSVGLVDGTVVLDLNGLEDQYGEGDLPVGYMPNLRRYTLLQLDGAWGRDKLLEALNLAVKGAEFVYQKARDALKNRYMAIAEEIYGR</sequence>
<name>RRP41_PYRNV</name>
<reference key="1">
    <citation type="submission" date="2008-03" db="EMBL/GenBank/DDBJ databases">
        <title>Complete sequence of Thermoproteus neutrophilus V24Sta.</title>
        <authorList>
            <consortium name="US DOE Joint Genome Institute"/>
            <person name="Copeland A."/>
            <person name="Lucas S."/>
            <person name="Lapidus A."/>
            <person name="Glavina del Rio T."/>
            <person name="Dalin E."/>
            <person name="Tice H."/>
            <person name="Bruce D."/>
            <person name="Goodwin L."/>
            <person name="Pitluck S."/>
            <person name="Sims D."/>
            <person name="Brettin T."/>
            <person name="Detter J.C."/>
            <person name="Han C."/>
            <person name="Kuske C.R."/>
            <person name="Schmutz J."/>
            <person name="Larimer F."/>
            <person name="Land M."/>
            <person name="Hauser L."/>
            <person name="Kyrpides N."/>
            <person name="Mikhailova N."/>
            <person name="Biddle J.F."/>
            <person name="Zhang Z."/>
            <person name="Fitz-Gibbon S.T."/>
            <person name="Lowe T.M."/>
            <person name="Saltikov C."/>
            <person name="House C.H."/>
            <person name="Richardson P."/>
        </authorList>
    </citation>
    <scope>NUCLEOTIDE SEQUENCE [LARGE SCALE GENOMIC DNA]</scope>
    <source>
        <strain>DSM 2338 / JCM 9278 / NBRC 100436 / V24Sta</strain>
    </source>
</reference>
<gene>
    <name evidence="1" type="primary">rrp41</name>
    <name type="ordered locus">Tneu_1381</name>
</gene>
<feature type="chain" id="PRO_1000146960" description="Exosome complex component Rrp41">
    <location>
        <begin position="1"/>
        <end position="246"/>
    </location>
</feature>
<comment type="function">
    <text evidence="1">Catalytic component of the exosome, which is a complex involved in RNA degradation. Has 3'-&gt;5' exoribonuclease activity. Can also synthesize heteromeric RNA-tails.</text>
</comment>
<comment type="subunit">
    <text evidence="1">Component of the archaeal exosome complex. Forms a hexameric ring-like arrangement composed of 3 Rrp41-Rrp42 heterodimers. The hexameric ring associates with a trimer of Rrp4 and/or Csl4 subunits.</text>
</comment>
<comment type="subcellular location">
    <subcellularLocation>
        <location evidence="1">Cytoplasm</location>
    </subcellularLocation>
</comment>
<comment type="similarity">
    <text evidence="1">Belongs to the RNase PH family. Rrp41 subfamily.</text>
</comment>
<protein>
    <recommendedName>
        <fullName evidence="1">Exosome complex component Rrp41</fullName>
        <ecNumber evidence="1">3.1.13.-</ecNumber>
    </recommendedName>
</protein>
<keyword id="KW-0963">Cytoplasm</keyword>
<keyword id="KW-0269">Exonuclease</keyword>
<keyword id="KW-0271">Exosome</keyword>
<keyword id="KW-0378">Hydrolase</keyword>
<keyword id="KW-0540">Nuclease</keyword>
<evidence type="ECO:0000255" key="1">
    <source>
        <dbReference type="HAMAP-Rule" id="MF_00591"/>
    </source>
</evidence>